<dbReference type="EC" id="6.3.5.-" evidence="1"/>
<dbReference type="EMBL" id="AE000782">
    <property type="protein sequence ID" value="AAB90360.1"/>
    <property type="molecule type" value="Genomic_DNA"/>
</dbReference>
<dbReference type="PIR" id="B69360">
    <property type="entry name" value="B69360"/>
</dbReference>
<dbReference type="SMR" id="O29380"/>
<dbReference type="STRING" id="224325.AF_0882"/>
<dbReference type="PaxDb" id="224325-AF_0882"/>
<dbReference type="EnsemblBacteria" id="AAB90360">
    <property type="protein sequence ID" value="AAB90360"/>
    <property type="gene ID" value="AF_0882"/>
</dbReference>
<dbReference type="KEGG" id="afu:AF_0882"/>
<dbReference type="eggNOG" id="arCOG01924">
    <property type="taxonomic scope" value="Archaea"/>
</dbReference>
<dbReference type="HOGENOM" id="CLU_019134_2_1_2"/>
<dbReference type="OrthoDB" id="371959at2157"/>
<dbReference type="PhylomeDB" id="O29380"/>
<dbReference type="Proteomes" id="UP000002199">
    <property type="component" value="Chromosome"/>
</dbReference>
<dbReference type="GO" id="GO:0004067">
    <property type="term" value="F:asparaginase activity"/>
    <property type="evidence" value="ECO:0007669"/>
    <property type="project" value="InterPro"/>
</dbReference>
<dbReference type="GO" id="GO:0005524">
    <property type="term" value="F:ATP binding"/>
    <property type="evidence" value="ECO:0007669"/>
    <property type="project" value="UniProtKB-KW"/>
</dbReference>
<dbReference type="GO" id="GO:0050567">
    <property type="term" value="F:glutaminyl-tRNA synthase (glutamine-hydrolyzing) activity"/>
    <property type="evidence" value="ECO:0007669"/>
    <property type="project" value="UniProtKB-UniRule"/>
</dbReference>
<dbReference type="GO" id="GO:0006520">
    <property type="term" value="P:amino acid metabolic process"/>
    <property type="evidence" value="ECO:0007669"/>
    <property type="project" value="InterPro"/>
</dbReference>
<dbReference type="GO" id="GO:0006450">
    <property type="term" value="P:regulation of translational fidelity"/>
    <property type="evidence" value="ECO:0007669"/>
    <property type="project" value="InterPro"/>
</dbReference>
<dbReference type="GO" id="GO:0006412">
    <property type="term" value="P:translation"/>
    <property type="evidence" value="ECO:0007669"/>
    <property type="project" value="UniProtKB-UniRule"/>
</dbReference>
<dbReference type="CDD" id="cd08962">
    <property type="entry name" value="GatD"/>
    <property type="match status" value="1"/>
</dbReference>
<dbReference type="FunFam" id="3.40.50.1170:FF:000001">
    <property type="entry name" value="L-asparaginase 2"/>
    <property type="match status" value="1"/>
</dbReference>
<dbReference type="Gene3D" id="2.30.30.520">
    <property type="match status" value="1"/>
</dbReference>
<dbReference type="Gene3D" id="3.40.50.40">
    <property type="match status" value="1"/>
</dbReference>
<dbReference type="Gene3D" id="3.40.50.1170">
    <property type="entry name" value="L-asparaginase, N-terminal domain"/>
    <property type="match status" value="1"/>
</dbReference>
<dbReference type="HAMAP" id="MF_00586">
    <property type="entry name" value="GatD"/>
    <property type="match status" value="1"/>
</dbReference>
<dbReference type="InterPro" id="IPR006033">
    <property type="entry name" value="AsnA_fam"/>
</dbReference>
<dbReference type="InterPro" id="IPR036152">
    <property type="entry name" value="Asp/glu_Ase-like_sf"/>
</dbReference>
<dbReference type="InterPro" id="IPR006034">
    <property type="entry name" value="Asparaginase/glutaminase-like"/>
</dbReference>
<dbReference type="InterPro" id="IPR020827">
    <property type="entry name" value="Asparaginase/glutaminase_AS1"/>
</dbReference>
<dbReference type="InterPro" id="IPR027475">
    <property type="entry name" value="Asparaginase/glutaminase_AS2"/>
</dbReference>
<dbReference type="InterPro" id="IPR040919">
    <property type="entry name" value="Asparaginase_C"/>
</dbReference>
<dbReference type="InterPro" id="IPR011878">
    <property type="entry name" value="GatD"/>
</dbReference>
<dbReference type="InterPro" id="IPR040918">
    <property type="entry name" value="GatD_N"/>
</dbReference>
<dbReference type="InterPro" id="IPR037222">
    <property type="entry name" value="GatD_N_sf"/>
</dbReference>
<dbReference type="InterPro" id="IPR027473">
    <property type="entry name" value="L-asparaginase_C"/>
</dbReference>
<dbReference type="InterPro" id="IPR027474">
    <property type="entry name" value="L-asparaginase_N"/>
</dbReference>
<dbReference type="InterPro" id="IPR037152">
    <property type="entry name" value="L-asparaginase_N_sf"/>
</dbReference>
<dbReference type="NCBIfam" id="TIGR00519">
    <property type="entry name" value="asnASE_I"/>
    <property type="match status" value="1"/>
</dbReference>
<dbReference type="NCBIfam" id="TIGR02153">
    <property type="entry name" value="gatD_arch"/>
    <property type="match status" value="1"/>
</dbReference>
<dbReference type="NCBIfam" id="NF003217">
    <property type="entry name" value="PRK04183.1"/>
    <property type="match status" value="1"/>
</dbReference>
<dbReference type="PANTHER" id="PTHR11707:SF28">
    <property type="entry name" value="60 KDA LYSOPHOSPHOLIPASE"/>
    <property type="match status" value="1"/>
</dbReference>
<dbReference type="PANTHER" id="PTHR11707">
    <property type="entry name" value="L-ASPARAGINASE"/>
    <property type="match status" value="1"/>
</dbReference>
<dbReference type="Pfam" id="PF00710">
    <property type="entry name" value="Asparaginase"/>
    <property type="match status" value="1"/>
</dbReference>
<dbReference type="Pfam" id="PF17763">
    <property type="entry name" value="Asparaginase_C"/>
    <property type="match status" value="1"/>
</dbReference>
<dbReference type="Pfam" id="PF18195">
    <property type="entry name" value="GatD_N"/>
    <property type="match status" value="1"/>
</dbReference>
<dbReference type="PIRSF" id="PIRSF500175">
    <property type="entry name" value="Glu_ADT_D"/>
    <property type="match status" value="1"/>
</dbReference>
<dbReference type="PIRSF" id="PIRSF001220">
    <property type="entry name" value="L-ASNase_gatD"/>
    <property type="match status" value="1"/>
</dbReference>
<dbReference type="PRINTS" id="PR00139">
    <property type="entry name" value="ASNGLNASE"/>
</dbReference>
<dbReference type="SMART" id="SM00870">
    <property type="entry name" value="Asparaginase"/>
    <property type="match status" value="1"/>
</dbReference>
<dbReference type="SUPFAM" id="SSF141300">
    <property type="entry name" value="GatD N-terminal domain-like"/>
    <property type="match status" value="1"/>
</dbReference>
<dbReference type="SUPFAM" id="SSF53774">
    <property type="entry name" value="Glutaminase/Asparaginase"/>
    <property type="match status" value="1"/>
</dbReference>
<dbReference type="PROSITE" id="PS00144">
    <property type="entry name" value="ASN_GLN_ASE_1"/>
    <property type="match status" value="1"/>
</dbReference>
<dbReference type="PROSITE" id="PS00917">
    <property type="entry name" value="ASN_GLN_ASE_2"/>
    <property type="match status" value="1"/>
</dbReference>
<dbReference type="PROSITE" id="PS51732">
    <property type="entry name" value="ASN_GLN_ASE_3"/>
    <property type="match status" value="1"/>
</dbReference>
<protein>
    <recommendedName>
        <fullName evidence="1">Glutamyl-tRNA(Gln) amidotransferase subunit D</fullName>
        <shortName evidence="1">Glu-ADT subunit D</shortName>
        <ecNumber evidence="1">6.3.5.-</ecNumber>
    </recommendedName>
</protein>
<name>GATD_ARCFU</name>
<keyword id="KW-0067">ATP-binding</keyword>
<keyword id="KW-0436">Ligase</keyword>
<keyword id="KW-0547">Nucleotide-binding</keyword>
<keyword id="KW-0648">Protein biosynthesis</keyword>
<keyword id="KW-1185">Reference proteome</keyword>
<sequence>MRPKSWGWISMSERLEGKRVRIKAKGKIFEGIVMPSFTGNFVLKLDNGYNVGFKEYELLEVLEVEPFEPHLPELVKREGLPDVKIISTGGTIASKVDYRTGAVTSQFTAEEIASEVPELTEICNVDAELLYNILSENMKPENWIELARHVYKALKDHEGVIITHGTDTMHFSAAALSFMLSTPKPVVFVGAQRSSDRPSSDAAMNLLCAAKAATEDIGEVVVCMHGSTSDDYCLVHRGVKVRKNHTSRRDAFQSVNAKPIGRIDYPSLSVEWLSWRYRRGERELKLTDRLERKVVLIKFFPGLSSDILEYYHSKGYRGFVIEGTGLGHVSTDWIDTLRRVCEDSVVVMTSQCLWGRVCDRVYDTGRDILRAGVIEGEDMLPEVALIKLMWLLGNYSIEEAKEMVKKSVAGEIEPTTQY</sequence>
<feature type="chain" id="PRO_0000140049" description="Glutamyl-tRNA(Gln) amidotransferase subunit D">
    <location>
        <begin position="1"/>
        <end position="418"/>
    </location>
</feature>
<feature type="domain" description="Asparaginase/glutaminase" evidence="2">
    <location>
        <begin position="81"/>
        <end position="407"/>
    </location>
</feature>
<feature type="active site" evidence="1">
    <location>
        <position position="91"/>
    </location>
</feature>
<feature type="active site" evidence="1">
    <location>
        <position position="166"/>
    </location>
</feature>
<feature type="active site" evidence="1">
    <location>
        <position position="167"/>
    </location>
</feature>
<feature type="active site" evidence="1">
    <location>
        <position position="243"/>
    </location>
</feature>
<proteinExistence type="inferred from homology"/>
<evidence type="ECO:0000255" key="1">
    <source>
        <dbReference type="HAMAP-Rule" id="MF_00586"/>
    </source>
</evidence>
<evidence type="ECO:0000255" key="2">
    <source>
        <dbReference type="PROSITE-ProRule" id="PRU01068"/>
    </source>
</evidence>
<reference key="1">
    <citation type="journal article" date="1997" name="Nature">
        <title>The complete genome sequence of the hyperthermophilic, sulphate-reducing archaeon Archaeoglobus fulgidus.</title>
        <authorList>
            <person name="Klenk H.-P."/>
            <person name="Clayton R.A."/>
            <person name="Tomb J.-F."/>
            <person name="White O."/>
            <person name="Nelson K.E."/>
            <person name="Ketchum K.A."/>
            <person name="Dodson R.J."/>
            <person name="Gwinn M.L."/>
            <person name="Hickey E.K."/>
            <person name="Peterson J.D."/>
            <person name="Richardson D.L."/>
            <person name="Kerlavage A.R."/>
            <person name="Graham D.E."/>
            <person name="Kyrpides N.C."/>
            <person name="Fleischmann R.D."/>
            <person name="Quackenbush J."/>
            <person name="Lee N.H."/>
            <person name="Sutton G.G."/>
            <person name="Gill S.R."/>
            <person name="Kirkness E.F."/>
            <person name="Dougherty B.A."/>
            <person name="McKenney K."/>
            <person name="Adams M.D."/>
            <person name="Loftus B.J."/>
            <person name="Peterson S.N."/>
            <person name="Reich C.I."/>
            <person name="McNeil L.K."/>
            <person name="Badger J.H."/>
            <person name="Glodek A."/>
            <person name="Zhou L."/>
            <person name="Overbeek R."/>
            <person name="Gocayne J.D."/>
            <person name="Weidman J.F."/>
            <person name="McDonald L.A."/>
            <person name="Utterback T.R."/>
            <person name="Cotton M.D."/>
            <person name="Spriggs T."/>
            <person name="Artiach P."/>
            <person name="Kaine B.P."/>
            <person name="Sykes S.M."/>
            <person name="Sadow P.W."/>
            <person name="D'Andrea K.P."/>
            <person name="Bowman C."/>
            <person name="Fujii C."/>
            <person name="Garland S.A."/>
            <person name="Mason T.M."/>
            <person name="Olsen G.J."/>
            <person name="Fraser C.M."/>
            <person name="Smith H.O."/>
            <person name="Woese C.R."/>
            <person name="Venter J.C."/>
        </authorList>
    </citation>
    <scope>NUCLEOTIDE SEQUENCE [LARGE SCALE GENOMIC DNA]</scope>
    <source>
        <strain>ATCC 49558 / DSM 4304 / JCM 9628 / NBRC 100126 / VC-16</strain>
    </source>
</reference>
<gene>
    <name evidence="1" type="primary">gatD</name>
    <name type="ordered locus">AF_0882</name>
</gene>
<comment type="function">
    <text evidence="1">Allows the formation of correctly charged Gln-tRNA(Gln) through the transamidation of misacylated Glu-tRNA(Gln) in organisms which lack glutaminyl-tRNA synthetase. The reaction takes place in the presence of glutamine and ATP through an activated gamma-phospho-Glu-tRNA(Gln). The GatDE system is specific for glutamate and does not act on aspartate.</text>
</comment>
<comment type="catalytic activity">
    <reaction evidence="1">
        <text>L-glutamyl-tRNA(Gln) + L-glutamine + ATP + H2O = L-glutaminyl-tRNA(Gln) + L-glutamate + ADP + phosphate + H(+)</text>
        <dbReference type="Rhea" id="RHEA:17521"/>
        <dbReference type="Rhea" id="RHEA-COMP:9681"/>
        <dbReference type="Rhea" id="RHEA-COMP:9684"/>
        <dbReference type="ChEBI" id="CHEBI:15377"/>
        <dbReference type="ChEBI" id="CHEBI:15378"/>
        <dbReference type="ChEBI" id="CHEBI:29985"/>
        <dbReference type="ChEBI" id="CHEBI:30616"/>
        <dbReference type="ChEBI" id="CHEBI:43474"/>
        <dbReference type="ChEBI" id="CHEBI:58359"/>
        <dbReference type="ChEBI" id="CHEBI:78520"/>
        <dbReference type="ChEBI" id="CHEBI:78521"/>
        <dbReference type="ChEBI" id="CHEBI:456216"/>
    </reaction>
</comment>
<comment type="subunit">
    <text evidence="1">Heterodimer of GatD and GatE.</text>
</comment>
<comment type="similarity">
    <text evidence="1">Belongs to the asparaginase 1 family. GatD subfamily.</text>
</comment>
<organism>
    <name type="scientific">Archaeoglobus fulgidus (strain ATCC 49558 / DSM 4304 / JCM 9628 / NBRC 100126 / VC-16)</name>
    <dbReference type="NCBI Taxonomy" id="224325"/>
    <lineage>
        <taxon>Archaea</taxon>
        <taxon>Methanobacteriati</taxon>
        <taxon>Methanobacteriota</taxon>
        <taxon>Archaeoglobi</taxon>
        <taxon>Archaeoglobales</taxon>
        <taxon>Archaeoglobaceae</taxon>
        <taxon>Archaeoglobus</taxon>
    </lineage>
</organism>
<accession>O29380</accession>